<name>SYC_BEUC1</name>
<comment type="catalytic activity">
    <reaction evidence="1">
        <text>tRNA(Cys) + L-cysteine + ATP = L-cysteinyl-tRNA(Cys) + AMP + diphosphate</text>
        <dbReference type="Rhea" id="RHEA:17773"/>
        <dbReference type="Rhea" id="RHEA-COMP:9661"/>
        <dbReference type="Rhea" id="RHEA-COMP:9679"/>
        <dbReference type="ChEBI" id="CHEBI:30616"/>
        <dbReference type="ChEBI" id="CHEBI:33019"/>
        <dbReference type="ChEBI" id="CHEBI:35235"/>
        <dbReference type="ChEBI" id="CHEBI:78442"/>
        <dbReference type="ChEBI" id="CHEBI:78517"/>
        <dbReference type="ChEBI" id="CHEBI:456215"/>
        <dbReference type="EC" id="6.1.1.16"/>
    </reaction>
</comment>
<comment type="cofactor">
    <cofactor evidence="1">
        <name>Zn(2+)</name>
        <dbReference type="ChEBI" id="CHEBI:29105"/>
    </cofactor>
    <text evidence="1">Binds 1 zinc ion per subunit.</text>
</comment>
<comment type="subunit">
    <text evidence="1">Monomer.</text>
</comment>
<comment type="subcellular location">
    <subcellularLocation>
        <location evidence="1">Cytoplasm</location>
    </subcellularLocation>
</comment>
<comment type="similarity">
    <text evidence="1">Belongs to the class-I aminoacyl-tRNA synthetase family.</text>
</comment>
<evidence type="ECO:0000255" key="1">
    <source>
        <dbReference type="HAMAP-Rule" id="MF_00041"/>
    </source>
</evidence>
<sequence length="474" mass="51574">MTLRLYDSATRAVRDFEPLEPGKVGIYLCGATVQGEPHVGHLRSVIAFDVLVRWLRRSGLDVTMIRNVTDIDDKILAKSAEAGVPWWAWAYRHERAFSDAYDAVGNLPPTYEPRATGHVVEMIELMQRLVDRGNAYRGKDGNVWFDVRSLADYGSLTRQKLENMSTLEEESSDKADPHDFALWKGLKPGDPETASWETPFGRGRPGWHLECSAMAYRYLGETFDIHGGGIDLRFPHHENEQAQSHAAGYGFARYWLHNAWVTAGGEKMSKSLGNYLTAAEALGRVPAVVLRYALASVHYRSSVEFTEATLAEARVTWERIAGFVTRAAELTGPVGDDGAARLADVVLPIAFVEAMDDDLNVSAALAVLHEHIRLGNTALSSGEAGDAAAELSAVRGMLDVLGLDPLAEPWVGEASATPLRGAVDVLVEGVLADRSAARAAKDWARADALRDQLAAAGVVVEDSPSGARWTIKGT</sequence>
<feature type="chain" id="PRO_1000202115" description="Cysteine--tRNA ligase">
    <location>
        <begin position="1"/>
        <end position="474"/>
    </location>
</feature>
<feature type="short sequence motif" description="'HIGH' region">
    <location>
        <begin position="31"/>
        <end position="41"/>
    </location>
</feature>
<feature type="short sequence motif" description="'KMSKS' region">
    <location>
        <begin position="267"/>
        <end position="271"/>
    </location>
</feature>
<feature type="binding site" evidence="1">
    <location>
        <position position="29"/>
    </location>
    <ligand>
        <name>Zn(2+)</name>
        <dbReference type="ChEBI" id="CHEBI:29105"/>
    </ligand>
</feature>
<feature type="binding site" evidence="1">
    <location>
        <position position="211"/>
    </location>
    <ligand>
        <name>Zn(2+)</name>
        <dbReference type="ChEBI" id="CHEBI:29105"/>
    </ligand>
</feature>
<feature type="binding site" evidence="1">
    <location>
        <position position="236"/>
    </location>
    <ligand>
        <name>Zn(2+)</name>
        <dbReference type="ChEBI" id="CHEBI:29105"/>
    </ligand>
</feature>
<feature type="binding site" evidence="1">
    <location>
        <position position="240"/>
    </location>
    <ligand>
        <name>Zn(2+)</name>
        <dbReference type="ChEBI" id="CHEBI:29105"/>
    </ligand>
</feature>
<feature type="binding site" evidence="1">
    <location>
        <position position="270"/>
    </location>
    <ligand>
        <name>ATP</name>
        <dbReference type="ChEBI" id="CHEBI:30616"/>
    </ligand>
</feature>
<gene>
    <name evidence="1" type="primary">cysS</name>
    <name type="ordered locus">Bcav_0780</name>
</gene>
<protein>
    <recommendedName>
        <fullName evidence="1">Cysteine--tRNA ligase</fullName>
        <ecNumber evidence="1">6.1.1.16</ecNumber>
    </recommendedName>
    <alternativeName>
        <fullName evidence="1">Cysteinyl-tRNA synthetase</fullName>
        <shortName evidence="1">CysRS</shortName>
    </alternativeName>
</protein>
<keyword id="KW-0030">Aminoacyl-tRNA synthetase</keyword>
<keyword id="KW-0067">ATP-binding</keyword>
<keyword id="KW-0963">Cytoplasm</keyword>
<keyword id="KW-0436">Ligase</keyword>
<keyword id="KW-0479">Metal-binding</keyword>
<keyword id="KW-0547">Nucleotide-binding</keyword>
<keyword id="KW-0648">Protein biosynthesis</keyword>
<keyword id="KW-1185">Reference proteome</keyword>
<keyword id="KW-0862">Zinc</keyword>
<accession>C5BYT3</accession>
<reference key="1">
    <citation type="journal article" date="2009" name="Stand. Genomic Sci.">
        <title>Complete genome sequence of Beutenbergia cavernae type strain (HKI 0122).</title>
        <authorList>
            <person name="Land M."/>
            <person name="Pukall R."/>
            <person name="Abt B."/>
            <person name="Goker M."/>
            <person name="Rohde M."/>
            <person name="Glavina Del Rio T."/>
            <person name="Tice H."/>
            <person name="Copeland A."/>
            <person name="Cheng J.F."/>
            <person name="Lucas S."/>
            <person name="Chen F."/>
            <person name="Nolan M."/>
            <person name="Bruce D."/>
            <person name="Goodwin L."/>
            <person name="Pitluck S."/>
            <person name="Ivanova N."/>
            <person name="Mavromatis K."/>
            <person name="Ovchinnikova G."/>
            <person name="Pati A."/>
            <person name="Chen A."/>
            <person name="Palaniappan K."/>
            <person name="Hauser L."/>
            <person name="Chang Y.J."/>
            <person name="Jefferies C.C."/>
            <person name="Saunders E."/>
            <person name="Brettin T."/>
            <person name="Detter J.C."/>
            <person name="Han C."/>
            <person name="Chain P."/>
            <person name="Bristow J."/>
            <person name="Eisen J.A."/>
            <person name="Markowitz V."/>
            <person name="Hugenholtz P."/>
            <person name="Kyrpides N.C."/>
            <person name="Klenk H.P."/>
            <person name="Lapidus A."/>
        </authorList>
    </citation>
    <scope>NUCLEOTIDE SEQUENCE [LARGE SCALE GENOMIC DNA]</scope>
    <source>
        <strain>ATCC BAA-8 / DSM 12333 / CCUG 43141 / JCM 11478 / NBRC 16432 / NCIMB 13614 / HKI 0122</strain>
    </source>
</reference>
<proteinExistence type="inferred from homology"/>
<dbReference type="EC" id="6.1.1.16" evidence="1"/>
<dbReference type="EMBL" id="CP001618">
    <property type="protein sequence ID" value="ACQ79041.1"/>
    <property type="molecule type" value="Genomic_DNA"/>
</dbReference>
<dbReference type="RefSeq" id="WP_012725821.1">
    <property type="nucleotide sequence ID" value="NC_012669.1"/>
</dbReference>
<dbReference type="SMR" id="C5BYT3"/>
<dbReference type="STRING" id="471853.Bcav_0780"/>
<dbReference type="KEGG" id="bcv:Bcav_0780"/>
<dbReference type="eggNOG" id="COG0215">
    <property type="taxonomic scope" value="Bacteria"/>
</dbReference>
<dbReference type="HOGENOM" id="CLU_013528_0_1_11"/>
<dbReference type="OrthoDB" id="9815130at2"/>
<dbReference type="Proteomes" id="UP000007962">
    <property type="component" value="Chromosome"/>
</dbReference>
<dbReference type="GO" id="GO:0005829">
    <property type="term" value="C:cytosol"/>
    <property type="evidence" value="ECO:0007669"/>
    <property type="project" value="TreeGrafter"/>
</dbReference>
<dbReference type="GO" id="GO:0005524">
    <property type="term" value="F:ATP binding"/>
    <property type="evidence" value="ECO:0007669"/>
    <property type="project" value="UniProtKB-UniRule"/>
</dbReference>
<dbReference type="GO" id="GO:0004817">
    <property type="term" value="F:cysteine-tRNA ligase activity"/>
    <property type="evidence" value="ECO:0007669"/>
    <property type="project" value="UniProtKB-UniRule"/>
</dbReference>
<dbReference type="GO" id="GO:0008270">
    <property type="term" value="F:zinc ion binding"/>
    <property type="evidence" value="ECO:0007669"/>
    <property type="project" value="UniProtKB-UniRule"/>
</dbReference>
<dbReference type="GO" id="GO:0006423">
    <property type="term" value="P:cysteinyl-tRNA aminoacylation"/>
    <property type="evidence" value="ECO:0007669"/>
    <property type="project" value="UniProtKB-UniRule"/>
</dbReference>
<dbReference type="CDD" id="cd00672">
    <property type="entry name" value="CysRS_core"/>
    <property type="match status" value="1"/>
</dbReference>
<dbReference type="FunFam" id="3.40.50.620:FF:000068">
    <property type="entry name" value="Cysteine--tRNA ligase"/>
    <property type="match status" value="1"/>
</dbReference>
<dbReference type="Gene3D" id="1.20.120.1910">
    <property type="entry name" value="Cysteine-tRNA ligase, C-terminal anti-codon recognition domain"/>
    <property type="match status" value="1"/>
</dbReference>
<dbReference type="Gene3D" id="3.40.50.620">
    <property type="entry name" value="HUPs"/>
    <property type="match status" value="1"/>
</dbReference>
<dbReference type="HAMAP" id="MF_00041">
    <property type="entry name" value="Cys_tRNA_synth"/>
    <property type="match status" value="1"/>
</dbReference>
<dbReference type="InterPro" id="IPR015803">
    <property type="entry name" value="Cys-tRNA-ligase"/>
</dbReference>
<dbReference type="InterPro" id="IPR015273">
    <property type="entry name" value="Cys-tRNA-synt_Ia_DALR"/>
</dbReference>
<dbReference type="InterPro" id="IPR024909">
    <property type="entry name" value="Cys-tRNA/MSH_ligase"/>
</dbReference>
<dbReference type="InterPro" id="IPR056411">
    <property type="entry name" value="CysS_C"/>
</dbReference>
<dbReference type="InterPro" id="IPR014729">
    <property type="entry name" value="Rossmann-like_a/b/a_fold"/>
</dbReference>
<dbReference type="InterPro" id="IPR032678">
    <property type="entry name" value="tRNA-synt_1_cat_dom"/>
</dbReference>
<dbReference type="InterPro" id="IPR009080">
    <property type="entry name" value="tRNAsynth_Ia_anticodon-bd"/>
</dbReference>
<dbReference type="NCBIfam" id="TIGR00435">
    <property type="entry name" value="cysS"/>
    <property type="match status" value="1"/>
</dbReference>
<dbReference type="PANTHER" id="PTHR10890:SF30">
    <property type="entry name" value="CYSTEINE--TRNA LIGASE"/>
    <property type="match status" value="1"/>
</dbReference>
<dbReference type="PANTHER" id="PTHR10890">
    <property type="entry name" value="CYSTEINYL-TRNA SYNTHETASE"/>
    <property type="match status" value="1"/>
</dbReference>
<dbReference type="Pfam" id="PF23493">
    <property type="entry name" value="CysS_C"/>
    <property type="match status" value="1"/>
</dbReference>
<dbReference type="Pfam" id="PF09190">
    <property type="entry name" value="DALR_2"/>
    <property type="match status" value="1"/>
</dbReference>
<dbReference type="Pfam" id="PF01406">
    <property type="entry name" value="tRNA-synt_1e"/>
    <property type="match status" value="1"/>
</dbReference>
<dbReference type="PRINTS" id="PR00983">
    <property type="entry name" value="TRNASYNTHCYS"/>
</dbReference>
<dbReference type="SMART" id="SM00840">
    <property type="entry name" value="DALR_2"/>
    <property type="match status" value="1"/>
</dbReference>
<dbReference type="SUPFAM" id="SSF47323">
    <property type="entry name" value="Anticodon-binding domain of a subclass of class I aminoacyl-tRNA synthetases"/>
    <property type="match status" value="1"/>
</dbReference>
<dbReference type="SUPFAM" id="SSF52374">
    <property type="entry name" value="Nucleotidylyl transferase"/>
    <property type="match status" value="1"/>
</dbReference>
<organism>
    <name type="scientific">Beutenbergia cavernae (strain ATCC BAA-8 / DSM 12333 / CCUG 43141 / JCM 11478 / NBRC 16432 / NCIMB 13614 / HKI 0122)</name>
    <dbReference type="NCBI Taxonomy" id="471853"/>
    <lineage>
        <taxon>Bacteria</taxon>
        <taxon>Bacillati</taxon>
        <taxon>Actinomycetota</taxon>
        <taxon>Actinomycetes</taxon>
        <taxon>Micrococcales</taxon>
        <taxon>Beutenbergiaceae</taxon>
        <taxon>Beutenbergia</taxon>
    </lineage>
</organism>